<name>RNPA_BIFLO</name>
<evidence type="ECO:0000255" key="1">
    <source>
        <dbReference type="HAMAP-Rule" id="MF_00227"/>
    </source>
</evidence>
<organism>
    <name type="scientific">Bifidobacterium longum (strain NCC 2705)</name>
    <dbReference type="NCBI Taxonomy" id="206672"/>
    <lineage>
        <taxon>Bacteria</taxon>
        <taxon>Bacillati</taxon>
        <taxon>Actinomycetota</taxon>
        <taxon>Actinomycetes</taxon>
        <taxon>Bifidobacteriales</taxon>
        <taxon>Bifidobacteriaceae</taxon>
        <taxon>Bifidobacterium</taxon>
    </lineage>
</organism>
<reference key="1">
    <citation type="journal article" date="2002" name="Proc. Natl. Acad. Sci. U.S.A.">
        <title>The genome sequence of Bifidobacterium longum reflects its adaptation to the human gastrointestinal tract.</title>
        <authorList>
            <person name="Schell M.A."/>
            <person name="Karmirantzou M."/>
            <person name="Snel B."/>
            <person name="Vilanova D."/>
            <person name="Berger B."/>
            <person name="Pessi G."/>
            <person name="Zwahlen M.-C."/>
            <person name="Desiere F."/>
            <person name="Bork P."/>
            <person name="Delley M."/>
            <person name="Pridmore R.D."/>
            <person name="Arigoni F."/>
        </authorList>
    </citation>
    <scope>NUCLEOTIDE SEQUENCE [LARGE SCALE GENOMIC DNA]</scope>
    <source>
        <strain>NCC 2705</strain>
    </source>
</reference>
<sequence>MERLQSHRDFVTVLKRRRKAGGKDIVVHYLVPDDHHDDDDRTVHRRLGLAVSKSVGHAVTRNTVKRRFRVLARAHEDLLPAHCDIVLRAKPSAATASFASLDQQIAKAFATVAHKVAEA</sequence>
<comment type="function">
    <text evidence="1">RNaseP catalyzes the removal of the 5'-leader sequence from pre-tRNA to produce the mature 5'-terminus. It can also cleave other RNA substrates such as 4.5S RNA. The protein component plays an auxiliary but essential role in vivo by binding to the 5'-leader sequence and broadening the substrate specificity of the ribozyme.</text>
</comment>
<comment type="catalytic activity">
    <reaction evidence="1">
        <text>Endonucleolytic cleavage of RNA, removing 5'-extranucleotides from tRNA precursor.</text>
        <dbReference type="EC" id="3.1.26.5"/>
    </reaction>
</comment>
<comment type="subunit">
    <text evidence="1">Consists of a catalytic RNA component (M1 or rnpB) and a protein subunit.</text>
</comment>
<comment type="similarity">
    <text evidence="1">Belongs to the RnpA family.</text>
</comment>
<keyword id="KW-0255">Endonuclease</keyword>
<keyword id="KW-0378">Hydrolase</keyword>
<keyword id="KW-0540">Nuclease</keyword>
<keyword id="KW-1185">Reference proteome</keyword>
<keyword id="KW-0694">RNA-binding</keyword>
<keyword id="KW-0819">tRNA processing</keyword>
<gene>
    <name evidence="1" type="primary">rnpA</name>
    <name type="ordered locus">BL0642.1</name>
    <name type="ORF">BL0642A</name>
</gene>
<feature type="chain" id="PRO_0000198427" description="Ribonuclease P protein component">
    <location>
        <begin position="1"/>
        <end position="119"/>
    </location>
</feature>
<proteinExistence type="inferred from homology"/>
<protein>
    <recommendedName>
        <fullName evidence="1">Ribonuclease P protein component</fullName>
        <shortName evidence="1">RNase P protein</shortName>
        <shortName evidence="1">RNaseP protein</shortName>
        <ecNumber evidence="1">3.1.26.5</ecNumber>
    </recommendedName>
    <alternativeName>
        <fullName evidence="1">Protein C5</fullName>
    </alternativeName>
</protein>
<dbReference type="EC" id="3.1.26.5" evidence="1"/>
<dbReference type="EMBL" id="AE014295">
    <property type="protein sequence ID" value="AAN24464.1"/>
    <property type="molecule type" value="Genomic_DNA"/>
</dbReference>
<dbReference type="RefSeq" id="NP_695828.1">
    <property type="nucleotide sequence ID" value="NC_004307.2"/>
</dbReference>
<dbReference type="RefSeq" id="WP_007051769.1">
    <property type="nucleotide sequence ID" value="NC_004307.2"/>
</dbReference>
<dbReference type="SMR" id="Q8G6J8"/>
<dbReference type="STRING" id="206672.BL0642a"/>
<dbReference type="EnsemblBacteria" id="AAN24464">
    <property type="protein sequence ID" value="AAN24464"/>
    <property type="gene ID" value="BL0642a"/>
</dbReference>
<dbReference type="GeneID" id="69579148"/>
<dbReference type="KEGG" id="blo:BL0642a"/>
<dbReference type="PATRIC" id="fig|206672.9.peg.1373"/>
<dbReference type="HOGENOM" id="CLU_117179_4_0_11"/>
<dbReference type="OrthoDB" id="196964at2"/>
<dbReference type="PhylomeDB" id="Q8G6J8"/>
<dbReference type="Proteomes" id="UP000000439">
    <property type="component" value="Chromosome"/>
</dbReference>
<dbReference type="GO" id="GO:0030677">
    <property type="term" value="C:ribonuclease P complex"/>
    <property type="evidence" value="ECO:0007669"/>
    <property type="project" value="TreeGrafter"/>
</dbReference>
<dbReference type="GO" id="GO:0042781">
    <property type="term" value="F:3'-tRNA processing endoribonuclease activity"/>
    <property type="evidence" value="ECO:0007669"/>
    <property type="project" value="TreeGrafter"/>
</dbReference>
<dbReference type="GO" id="GO:0004526">
    <property type="term" value="F:ribonuclease P activity"/>
    <property type="evidence" value="ECO:0007669"/>
    <property type="project" value="UniProtKB-UniRule"/>
</dbReference>
<dbReference type="GO" id="GO:0000049">
    <property type="term" value="F:tRNA binding"/>
    <property type="evidence" value="ECO:0007669"/>
    <property type="project" value="UniProtKB-UniRule"/>
</dbReference>
<dbReference type="GO" id="GO:0001682">
    <property type="term" value="P:tRNA 5'-leader removal"/>
    <property type="evidence" value="ECO:0007669"/>
    <property type="project" value="UniProtKB-UniRule"/>
</dbReference>
<dbReference type="Gene3D" id="3.30.230.10">
    <property type="match status" value="1"/>
</dbReference>
<dbReference type="HAMAP" id="MF_00227">
    <property type="entry name" value="RNase_P"/>
    <property type="match status" value="1"/>
</dbReference>
<dbReference type="InterPro" id="IPR020568">
    <property type="entry name" value="Ribosomal_Su5_D2-typ_SF"/>
</dbReference>
<dbReference type="InterPro" id="IPR014721">
    <property type="entry name" value="Ribsml_uS5_D2-typ_fold_subgr"/>
</dbReference>
<dbReference type="InterPro" id="IPR000100">
    <property type="entry name" value="RNase_P"/>
</dbReference>
<dbReference type="NCBIfam" id="TIGR00188">
    <property type="entry name" value="rnpA"/>
    <property type="match status" value="1"/>
</dbReference>
<dbReference type="PANTHER" id="PTHR33992">
    <property type="entry name" value="RIBONUCLEASE P PROTEIN COMPONENT"/>
    <property type="match status" value="1"/>
</dbReference>
<dbReference type="PANTHER" id="PTHR33992:SF1">
    <property type="entry name" value="RIBONUCLEASE P PROTEIN COMPONENT"/>
    <property type="match status" value="1"/>
</dbReference>
<dbReference type="Pfam" id="PF00825">
    <property type="entry name" value="Ribonuclease_P"/>
    <property type="match status" value="1"/>
</dbReference>
<dbReference type="SUPFAM" id="SSF54211">
    <property type="entry name" value="Ribosomal protein S5 domain 2-like"/>
    <property type="match status" value="1"/>
</dbReference>
<accession>Q8G6J8</accession>